<evidence type="ECO:0000250" key="1">
    <source>
        <dbReference type="UniProtKB" id="P68930"/>
    </source>
</evidence>
<evidence type="ECO:0000256" key="2">
    <source>
        <dbReference type="SAM" id="MobiDB-lite"/>
    </source>
</evidence>
<evidence type="ECO:0000305" key="3"/>
<dbReference type="EMBL" id="M11813">
    <property type="protein sequence ID" value="AAA88488.1"/>
    <property type="molecule type" value="Genomic_DNA"/>
</dbReference>
<dbReference type="PIR" id="F24831">
    <property type="entry name" value="WMBP11"/>
</dbReference>
<dbReference type="SMR" id="P68931"/>
<dbReference type="Proteomes" id="UP000000855">
    <property type="component" value="Segment"/>
</dbReference>
<dbReference type="GO" id="GO:0098026">
    <property type="term" value="C:virus tail, tube"/>
    <property type="evidence" value="ECO:0007669"/>
    <property type="project" value="UniProtKB-KW"/>
</dbReference>
<dbReference type="GO" id="GO:0099002">
    <property type="term" value="P:symbiont genome ejection through host cell envelope, short tail mechanism"/>
    <property type="evidence" value="ECO:0007669"/>
    <property type="project" value="UniProtKB-KW"/>
</dbReference>
<protein>
    <recommendedName>
        <fullName evidence="1">Proximal tail tube connector protein</fullName>
    </recommendedName>
    <alternativeName>
        <fullName evidence="1">Gene product 11</fullName>
        <shortName evidence="1">gp11</shortName>
    </alternativeName>
    <alternativeName>
        <fullName evidence="1">Lower collar protein</fullName>
    </alternativeName>
    <alternativeName>
        <fullName evidence="1">Protein p11</fullName>
    </alternativeName>
</protein>
<reference key="1">
    <citation type="journal article" date="1986" name="Gene">
        <title>Nucleotide sequence of the late region of Bacillus subtilis phage PZA, a close relative of phi 29.</title>
        <authorList>
            <person name="Paces V."/>
            <person name="Vlcek C."/>
            <person name="Urbanek P."/>
        </authorList>
    </citation>
    <scope>NUCLEOTIDE SEQUENCE [GENOMIC DNA]</scope>
</reference>
<organism>
    <name type="scientific">Bacillus phage PZA</name>
    <name type="common">Bacteriophage PZA</name>
    <dbReference type="NCBI Taxonomy" id="10757"/>
    <lineage>
        <taxon>Viruses</taxon>
        <taxon>Duplodnaviria</taxon>
        <taxon>Heunggongvirae</taxon>
        <taxon>Uroviricota</taxon>
        <taxon>Caudoviricetes</taxon>
        <taxon>Salasmaviridae</taxon>
        <taxon>Picovirinae</taxon>
        <taxon>Salasvirus</taxon>
        <taxon>Salasvirus PZA</taxon>
    </lineage>
</organism>
<feature type="chain" id="PRO_0000106590" description="Proximal tail tube connector protein">
    <location>
        <begin position="1"/>
        <end position="293"/>
    </location>
</feature>
<feature type="region of interest" description="Disordered" evidence="2">
    <location>
        <begin position="106"/>
        <end position="166"/>
    </location>
</feature>
<feature type="region of interest" description="Disordered" evidence="2">
    <location>
        <begin position="192"/>
        <end position="240"/>
    </location>
</feature>
<feature type="compositionally biased region" description="Basic and acidic residues" evidence="2">
    <location>
        <begin position="112"/>
        <end position="126"/>
    </location>
</feature>
<feature type="compositionally biased region" description="Polar residues" evidence="2">
    <location>
        <begin position="127"/>
        <end position="160"/>
    </location>
</feature>
<feature type="compositionally biased region" description="Basic and acidic residues" evidence="2">
    <location>
        <begin position="193"/>
        <end position="205"/>
    </location>
</feature>
<feature type="compositionally biased region" description="Low complexity" evidence="2">
    <location>
        <begin position="206"/>
        <end position="231"/>
    </location>
</feature>
<proteinExistence type="inferred from homology"/>
<organismHost>
    <name type="scientific">Bacillus subtilis</name>
    <dbReference type="NCBI Taxonomy" id="1423"/>
</organismHost>
<keyword id="KW-0426">Late protein</keyword>
<keyword id="KW-1171">Viral genome ejection through host cell envelope</keyword>
<keyword id="KW-1162">Viral penetration into host cytoplasm</keyword>
<keyword id="KW-1244">Viral short tail ejection system</keyword>
<keyword id="KW-1227">Viral tail protein</keyword>
<keyword id="KW-1228">Viral tail tube protein</keyword>
<keyword id="KW-0946">Virion</keyword>
<keyword id="KW-1160">Virus entry into host cell</keyword>
<accession>P68931</accession>
<accession>P04333</accession>
<accession>P07536</accession>
<comment type="function">
    <text evidence="1">Forms the proximal part of the tail tube.</text>
</comment>
<comment type="subcellular location">
    <subcellularLocation>
        <location evidence="1">Virion</location>
    </subcellularLocation>
    <text evidence="1">Present in 12 copies in the virion.</text>
</comment>
<comment type="similarity">
    <text evidence="3">Belongs to the phi29likevirus proximal tail tube connector protein family.</text>
</comment>
<gene>
    <name type="primary">11</name>
</gene>
<name>TUB11_BPPZA</name>
<sequence>MSSYTMQLRTYIEMWSQGETGLSTAEKIEKGRPKLFDFNYPIFDESYRTIFETHFIRNFYMREIGFETEGLFKFHLETWLMINMPYFNKLFESELIKYDPLENTRVGVKSNTKNDTDRNDNRDVKQDLTSNGTSSTDAKQNDTSKTTGNEKSSGSGSITDDNFKRDLNADTADDRLQLTTKDGEGVLEYASQIEEHNENKKRDTKTSNTTDTTSNTTGTSTLDSDSKTSNKANTTSNDKLNSQINSVEDYIEDRVGKIGTQSYARLVMDYREALLRIEQRIFNEMQELFMLVY</sequence>